<reference key="1">
    <citation type="journal article" date="2006" name="J. Bacteriol.">
        <title>Living with genome instability: the adaptation of phytoplasmas to diverse environments of their insect and plant hosts.</title>
        <authorList>
            <person name="Bai X."/>
            <person name="Zhang J."/>
            <person name="Ewing A."/>
            <person name="Miller S.A."/>
            <person name="Jancso Radek A."/>
            <person name="Shevchenko D.V."/>
            <person name="Tsukerman K."/>
            <person name="Walunas T."/>
            <person name="Lapidus A."/>
            <person name="Campbell J.W."/>
            <person name="Hogenhout S.A."/>
        </authorList>
    </citation>
    <scope>NUCLEOTIDE SEQUENCE [LARGE SCALE GENOMIC DNA]</scope>
    <source>
        <strain>AYWB</strain>
    </source>
</reference>
<name>RS13_AYWBP</name>
<dbReference type="EMBL" id="CP000061">
    <property type="protein sequence ID" value="ABC65614.1"/>
    <property type="molecule type" value="Genomic_DNA"/>
</dbReference>
<dbReference type="RefSeq" id="WP_011412777.1">
    <property type="nucleotide sequence ID" value="NC_007716.1"/>
</dbReference>
<dbReference type="SMR" id="Q2NIX9"/>
<dbReference type="STRING" id="322098.AYWB_497"/>
<dbReference type="KEGG" id="ayw:AYWB_497"/>
<dbReference type="eggNOG" id="COG0099">
    <property type="taxonomic scope" value="Bacteria"/>
</dbReference>
<dbReference type="HOGENOM" id="CLU_103849_1_2_14"/>
<dbReference type="OrthoDB" id="9803610at2"/>
<dbReference type="PhylomeDB" id="Q2NIX9"/>
<dbReference type="Proteomes" id="UP000001934">
    <property type="component" value="Chromosome"/>
</dbReference>
<dbReference type="GO" id="GO:0005829">
    <property type="term" value="C:cytosol"/>
    <property type="evidence" value="ECO:0007669"/>
    <property type="project" value="TreeGrafter"/>
</dbReference>
<dbReference type="GO" id="GO:0015935">
    <property type="term" value="C:small ribosomal subunit"/>
    <property type="evidence" value="ECO:0007669"/>
    <property type="project" value="TreeGrafter"/>
</dbReference>
<dbReference type="GO" id="GO:0019843">
    <property type="term" value="F:rRNA binding"/>
    <property type="evidence" value="ECO:0007669"/>
    <property type="project" value="UniProtKB-UniRule"/>
</dbReference>
<dbReference type="GO" id="GO:0003735">
    <property type="term" value="F:structural constituent of ribosome"/>
    <property type="evidence" value="ECO:0007669"/>
    <property type="project" value="InterPro"/>
</dbReference>
<dbReference type="GO" id="GO:0000049">
    <property type="term" value="F:tRNA binding"/>
    <property type="evidence" value="ECO:0007669"/>
    <property type="project" value="UniProtKB-UniRule"/>
</dbReference>
<dbReference type="GO" id="GO:0006412">
    <property type="term" value="P:translation"/>
    <property type="evidence" value="ECO:0007669"/>
    <property type="project" value="UniProtKB-UniRule"/>
</dbReference>
<dbReference type="FunFam" id="1.10.8.50:FF:000001">
    <property type="entry name" value="30S ribosomal protein S13"/>
    <property type="match status" value="1"/>
</dbReference>
<dbReference type="FunFam" id="4.10.910.10:FF:000001">
    <property type="entry name" value="30S ribosomal protein S13"/>
    <property type="match status" value="1"/>
</dbReference>
<dbReference type="Gene3D" id="1.10.8.50">
    <property type="match status" value="1"/>
</dbReference>
<dbReference type="Gene3D" id="4.10.910.10">
    <property type="entry name" value="30s ribosomal protein s13, domain 2"/>
    <property type="match status" value="1"/>
</dbReference>
<dbReference type="HAMAP" id="MF_01315">
    <property type="entry name" value="Ribosomal_uS13"/>
    <property type="match status" value="1"/>
</dbReference>
<dbReference type="InterPro" id="IPR027437">
    <property type="entry name" value="Rbsml_uS13_C"/>
</dbReference>
<dbReference type="InterPro" id="IPR001892">
    <property type="entry name" value="Ribosomal_uS13"/>
</dbReference>
<dbReference type="InterPro" id="IPR010979">
    <property type="entry name" value="Ribosomal_uS13-like_H2TH"/>
</dbReference>
<dbReference type="InterPro" id="IPR019980">
    <property type="entry name" value="Ribosomal_uS13_bac-type"/>
</dbReference>
<dbReference type="InterPro" id="IPR018269">
    <property type="entry name" value="Ribosomal_uS13_CS"/>
</dbReference>
<dbReference type="NCBIfam" id="TIGR03631">
    <property type="entry name" value="uS13_bact"/>
    <property type="match status" value="1"/>
</dbReference>
<dbReference type="PANTHER" id="PTHR10871">
    <property type="entry name" value="30S RIBOSOMAL PROTEIN S13/40S RIBOSOMAL PROTEIN S18"/>
    <property type="match status" value="1"/>
</dbReference>
<dbReference type="PANTHER" id="PTHR10871:SF1">
    <property type="entry name" value="SMALL RIBOSOMAL SUBUNIT PROTEIN US13M"/>
    <property type="match status" value="1"/>
</dbReference>
<dbReference type="Pfam" id="PF00416">
    <property type="entry name" value="Ribosomal_S13"/>
    <property type="match status" value="1"/>
</dbReference>
<dbReference type="PIRSF" id="PIRSF002134">
    <property type="entry name" value="Ribosomal_S13"/>
    <property type="match status" value="1"/>
</dbReference>
<dbReference type="SUPFAM" id="SSF46946">
    <property type="entry name" value="S13-like H2TH domain"/>
    <property type="match status" value="1"/>
</dbReference>
<dbReference type="PROSITE" id="PS00646">
    <property type="entry name" value="RIBOSOMAL_S13_1"/>
    <property type="match status" value="1"/>
</dbReference>
<dbReference type="PROSITE" id="PS50159">
    <property type="entry name" value="RIBOSOMAL_S13_2"/>
    <property type="match status" value="1"/>
</dbReference>
<comment type="function">
    <text evidence="1">Located at the top of the head of the 30S subunit, it contacts several helices of the 16S rRNA. In the 70S ribosome it contacts the 23S rRNA (bridge B1a) and protein L5 of the 50S subunit (bridge B1b), connecting the 2 subunits; these bridges are implicated in subunit movement. Contacts the tRNAs in the A and P-sites.</text>
</comment>
<comment type="subunit">
    <text evidence="1">Part of the 30S ribosomal subunit. Forms a loose heterodimer with protein S19. Forms two bridges to the 50S subunit in the 70S ribosome.</text>
</comment>
<comment type="similarity">
    <text evidence="1">Belongs to the universal ribosomal protein uS13 family.</text>
</comment>
<sequence>MARIAGIDIPSDKRVVIALTYIYGLGNKLSHKILNELKIDQNIRVKNLTEQQLSALRIEITKYNVEGDLRREVTLNIKRLMEIGAYRGLRHRKGLPVRGQKTRNNAHTVKGKPKAAIAGKKKNKVN</sequence>
<accession>Q2NIX9</accession>
<organism>
    <name type="scientific">Aster yellows witches'-broom phytoplasma (strain AYWB)</name>
    <dbReference type="NCBI Taxonomy" id="322098"/>
    <lineage>
        <taxon>Bacteria</taxon>
        <taxon>Bacillati</taxon>
        <taxon>Mycoplasmatota</taxon>
        <taxon>Mollicutes</taxon>
        <taxon>Acholeplasmatales</taxon>
        <taxon>Acholeplasmataceae</taxon>
        <taxon>Candidatus Phytoplasma</taxon>
        <taxon>16SrI (Aster yellows group)</taxon>
    </lineage>
</organism>
<protein>
    <recommendedName>
        <fullName evidence="1">Small ribosomal subunit protein uS13</fullName>
    </recommendedName>
    <alternativeName>
        <fullName evidence="3">30S ribosomal protein S13</fullName>
    </alternativeName>
</protein>
<feature type="chain" id="PRO_0000306562" description="Small ribosomal subunit protein uS13">
    <location>
        <begin position="1"/>
        <end position="126"/>
    </location>
</feature>
<feature type="region of interest" description="Disordered" evidence="2">
    <location>
        <begin position="94"/>
        <end position="126"/>
    </location>
</feature>
<feature type="compositionally biased region" description="Basic residues" evidence="2">
    <location>
        <begin position="109"/>
        <end position="126"/>
    </location>
</feature>
<keyword id="KW-0687">Ribonucleoprotein</keyword>
<keyword id="KW-0689">Ribosomal protein</keyword>
<keyword id="KW-0694">RNA-binding</keyword>
<keyword id="KW-0699">rRNA-binding</keyword>
<keyword id="KW-0820">tRNA-binding</keyword>
<proteinExistence type="inferred from homology"/>
<gene>
    <name evidence="1" type="primary">rpsM</name>
    <name type="ordered locus">AYWB_497</name>
</gene>
<evidence type="ECO:0000255" key="1">
    <source>
        <dbReference type="HAMAP-Rule" id="MF_01315"/>
    </source>
</evidence>
<evidence type="ECO:0000256" key="2">
    <source>
        <dbReference type="SAM" id="MobiDB-lite"/>
    </source>
</evidence>
<evidence type="ECO:0000305" key="3"/>